<proteinExistence type="predicted"/>
<keyword id="KW-0175">Coiled coil</keyword>
<keyword id="KW-1185">Reference proteome</keyword>
<feature type="chain" id="PRO_0000253445" description="Uncharacterized protein R558">
    <location>
        <begin position="1"/>
        <end position="465"/>
    </location>
</feature>
<feature type="region of interest" description="Disordered" evidence="2">
    <location>
        <begin position="1"/>
        <end position="55"/>
    </location>
</feature>
<feature type="region of interest" description="Disordered" evidence="2">
    <location>
        <begin position="70"/>
        <end position="164"/>
    </location>
</feature>
<feature type="region of interest" description="Disordered" evidence="2">
    <location>
        <begin position="221"/>
        <end position="313"/>
    </location>
</feature>
<feature type="coiled-coil region" evidence="1">
    <location>
        <begin position="390"/>
        <end position="423"/>
    </location>
</feature>
<feature type="compositionally biased region" description="Basic and acidic residues" evidence="2">
    <location>
        <begin position="40"/>
        <end position="50"/>
    </location>
</feature>
<feature type="compositionally biased region" description="Polar residues" evidence="2">
    <location>
        <begin position="73"/>
        <end position="82"/>
    </location>
</feature>
<feature type="compositionally biased region" description="Low complexity" evidence="2">
    <location>
        <begin position="83"/>
        <end position="134"/>
    </location>
</feature>
<feature type="compositionally biased region" description="Basic and acidic residues" evidence="2">
    <location>
        <begin position="141"/>
        <end position="150"/>
    </location>
</feature>
<feature type="compositionally biased region" description="Low complexity" evidence="2">
    <location>
        <begin position="221"/>
        <end position="235"/>
    </location>
</feature>
<feature type="compositionally biased region" description="Basic and acidic residues" evidence="2">
    <location>
        <begin position="236"/>
        <end position="249"/>
    </location>
</feature>
<feature type="compositionally biased region" description="Basic and acidic residues" evidence="2">
    <location>
        <begin position="259"/>
        <end position="275"/>
    </location>
</feature>
<feature type="compositionally biased region" description="Polar residues" evidence="2">
    <location>
        <begin position="288"/>
        <end position="306"/>
    </location>
</feature>
<protein>
    <recommendedName>
        <fullName>Uncharacterized protein R558</fullName>
    </recommendedName>
</protein>
<dbReference type="EMBL" id="AY653733">
    <property type="protein sequence ID" value="AAV50822.1"/>
    <property type="molecule type" value="Genomic_DNA"/>
</dbReference>
<dbReference type="SMR" id="Q5UR38"/>
<dbReference type="KEGG" id="vg:9925193"/>
<dbReference type="OrthoDB" id="24824at10239"/>
<dbReference type="Proteomes" id="UP000001134">
    <property type="component" value="Genome"/>
</dbReference>
<organism>
    <name type="scientific">Acanthamoeba polyphaga mimivirus</name>
    <name type="common">APMV</name>
    <dbReference type="NCBI Taxonomy" id="212035"/>
    <lineage>
        <taxon>Viruses</taxon>
        <taxon>Varidnaviria</taxon>
        <taxon>Bamfordvirae</taxon>
        <taxon>Nucleocytoviricota</taxon>
        <taxon>Megaviricetes</taxon>
        <taxon>Imitervirales</taxon>
        <taxon>Mimiviridae</taxon>
        <taxon>Megamimivirinae</taxon>
        <taxon>Mimivirus</taxon>
        <taxon>Mimivirus bradfordmassiliense</taxon>
    </lineage>
</organism>
<evidence type="ECO:0000255" key="1"/>
<evidence type="ECO:0000256" key="2">
    <source>
        <dbReference type="SAM" id="MobiDB-lite"/>
    </source>
</evidence>
<name>YR558_MIMIV</name>
<accession>Q5UR38</accession>
<sequence>MNSSNSNDHENLSAQEFIISDIEEDPDTNYEPPVNDSESENYKDNSDHSNHSSHQNKFYYQNFPENFSKDFSESFNDNQNLKNFNTTDNNFNDDYNNDYDSNNDSNNDSNNDSNNDYDNESNNYFNNDSNNDSNNDSDIEETTKHKLPIERKKRGPPKSIVEGQKKYIEMMERQNRMIKKDKNKSLKQMDAVKLPTSNAKPGPETRRVIIGGKIKYIPIKTTDNQSNTESSQENNVIKKEPNNKLDKQPQKISSNIKDIVPKQETDKKSPVKSIKELSVNEPDDIDSIDQSNKLGKSYNTNNNNSKPIEKQRVPPSLVKKMEVYNSKLAKEMNNINRKKNISGKNVPSKYAKHIEDDVRKQTVRNVKSFSDLRRVKALQDITPDSGVDVNKASIAELKKMRLEQRKREIEEKRRQVENKKPDSAVQAILNNNDLSKFAKMVAIKNLSVNSRHRKMKTGNNVLNKE</sequence>
<gene>
    <name type="ordered locus">MIMI_R558</name>
</gene>
<organismHost>
    <name type="scientific">Acanthamoeba polyphaga</name>
    <name type="common">Amoeba</name>
    <dbReference type="NCBI Taxonomy" id="5757"/>
</organismHost>
<reference key="1">
    <citation type="journal article" date="2004" name="Science">
        <title>The 1.2-megabase genome sequence of Mimivirus.</title>
        <authorList>
            <person name="Raoult D."/>
            <person name="Audic S."/>
            <person name="Robert C."/>
            <person name="Abergel C."/>
            <person name="Renesto P."/>
            <person name="Ogata H."/>
            <person name="La Scola B."/>
            <person name="Susan M."/>
            <person name="Claverie J.-M."/>
        </authorList>
    </citation>
    <scope>NUCLEOTIDE SEQUENCE [LARGE SCALE GENOMIC DNA]</scope>
    <source>
        <strain>Rowbotham-Bradford</strain>
    </source>
</reference>